<protein>
    <recommendedName>
        <fullName evidence="3">KH domain-containing RNA-binding protein QKI</fullName>
    </recommendedName>
    <alternativeName>
        <fullName evidence="3">Protein quaking</fullName>
        <shortName evidence="4">CqkI</shortName>
    </alternativeName>
</protein>
<feature type="chain" id="PRO_0000239370" description="KH domain-containing RNA-binding protein QKI">
    <location>
        <begin position="1"/>
        <end position="341"/>
    </location>
</feature>
<feature type="domain" description="KH">
    <location>
        <begin position="87"/>
        <end position="153"/>
    </location>
</feature>
<feature type="region of interest" description="Qua1 domain; involved in homodimerization" evidence="1">
    <location>
        <begin position="11"/>
        <end position="82"/>
    </location>
</feature>
<feature type="region of interest" description="Qua2 domain; involved in RNA binding" evidence="2">
    <location>
        <begin position="182"/>
        <end position="213"/>
    </location>
</feature>
<feature type="short sequence motif" description="SH3-binding">
    <location>
        <begin position="276"/>
        <end position="279"/>
    </location>
</feature>
<feature type="short sequence motif" description="Nuclear localization signal" evidence="3">
    <location>
        <begin position="324"/>
        <end position="330"/>
    </location>
</feature>
<feature type="site" description="Involved in RNA binding" evidence="2">
    <location>
        <position position="97"/>
    </location>
</feature>
<feature type="site" description="Involved in RNA binding" evidence="2">
    <location>
        <position position="120"/>
    </location>
</feature>
<feature type="site" description="Involved in RNA binding" evidence="2">
    <location>
        <position position="124"/>
    </location>
</feature>
<feature type="site" description="Involved in RNA binding" evidence="2">
    <location>
        <position position="130"/>
    </location>
</feature>
<feature type="site" description="Involved in RNA binding" evidence="2">
    <location>
        <position position="190"/>
    </location>
</feature>
<feature type="site" description="Involved in RNA binding" evidence="2">
    <location>
        <position position="193"/>
    </location>
</feature>
<feature type="modified residue" description="Phosphoserine" evidence="2">
    <location>
        <position position="188"/>
    </location>
</feature>
<feature type="modified residue" description="Omega-N-methylarginine" evidence="2">
    <location>
        <position position="227"/>
    </location>
</feature>
<feature type="modified residue" description="Asymmetric dimethylarginine; by CARM1; alternate" evidence="2">
    <location>
        <position position="242"/>
    </location>
</feature>
<feature type="modified residue" description="Omega-N-methylarginine; alternate" evidence="2">
    <location>
        <position position="242"/>
    </location>
</feature>
<feature type="modified residue" description="Omega-N-methylarginine" evidence="3">
    <location>
        <position position="256"/>
    </location>
</feature>
<organism>
    <name type="scientific">Canis lupus familiaris</name>
    <name type="common">Dog</name>
    <name type="synonym">Canis familiaris</name>
    <dbReference type="NCBI Taxonomy" id="9615"/>
    <lineage>
        <taxon>Eukaryota</taxon>
        <taxon>Metazoa</taxon>
        <taxon>Chordata</taxon>
        <taxon>Craniata</taxon>
        <taxon>Vertebrata</taxon>
        <taxon>Euteleostomi</taxon>
        <taxon>Mammalia</taxon>
        <taxon>Eutheria</taxon>
        <taxon>Laurasiatheria</taxon>
        <taxon>Carnivora</taxon>
        <taxon>Caniformia</taxon>
        <taxon>Canidae</taxon>
        <taxon>Canis</taxon>
    </lineage>
</organism>
<dbReference type="EMBL" id="AB047312">
    <property type="protein sequence ID" value="BAB11981.1"/>
    <property type="molecule type" value="mRNA"/>
</dbReference>
<dbReference type="RefSeq" id="NP_001003021.1">
    <property type="nucleotide sequence ID" value="NM_001003021.2"/>
</dbReference>
<dbReference type="SMR" id="Q9GMY1"/>
<dbReference type="FunCoup" id="Q9GMY1">
    <property type="interactions" value="1195"/>
</dbReference>
<dbReference type="STRING" id="9615.ENSCAFP00000030367"/>
<dbReference type="PaxDb" id="9612-ENSCAFP00000030367"/>
<dbReference type="Ensembl" id="ENSCAFT00030019710.1">
    <property type="protein sequence ID" value="ENSCAFP00030017189.1"/>
    <property type="gene ID" value="ENSCAFG00030010469.1"/>
</dbReference>
<dbReference type="Ensembl" id="ENSCAFT00040001984.1">
    <property type="protein sequence ID" value="ENSCAFP00040001698.1"/>
    <property type="gene ID" value="ENSCAFG00040001027.1"/>
</dbReference>
<dbReference type="GeneID" id="606754"/>
<dbReference type="KEGG" id="cfa:606754"/>
<dbReference type="CTD" id="9444"/>
<dbReference type="eggNOG" id="KOG1588">
    <property type="taxonomic scope" value="Eukaryota"/>
</dbReference>
<dbReference type="InParanoid" id="Q9GMY1"/>
<dbReference type="OrthoDB" id="6777263at2759"/>
<dbReference type="Proteomes" id="UP000002254">
    <property type="component" value="Unplaced"/>
</dbReference>
<dbReference type="Proteomes" id="UP000694429">
    <property type="component" value="Chromosome 1"/>
</dbReference>
<dbReference type="Proteomes" id="UP000694542">
    <property type="component" value="Chromosome 1"/>
</dbReference>
<dbReference type="Proteomes" id="UP000805418">
    <property type="component" value="Unplaced"/>
</dbReference>
<dbReference type="GO" id="GO:0005737">
    <property type="term" value="C:cytoplasm"/>
    <property type="evidence" value="ECO:0007669"/>
    <property type="project" value="UniProtKB-SubCell"/>
</dbReference>
<dbReference type="GO" id="GO:0005634">
    <property type="term" value="C:nucleus"/>
    <property type="evidence" value="ECO:0000318"/>
    <property type="project" value="GO_Central"/>
</dbReference>
<dbReference type="GO" id="GO:0003677">
    <property type="term" value="F:DNA binding"/>
    <property type="evidence" value="ECO:0007669"/>
    <property type="project" value="UniProtKB-KW"/>
</dbReference>
<dbReference type="GO" id="GO:0035198">
    <property type="term" value="F:miRNA binding"/>
    <property type="evidence" value="ECO:0000250"/>
    <property type="project" value="UniProtKB"/>
</dbReference>
<dbReference type="GO" id="GO:0003729">
    <property type="term" value="F:mRNA binding"/>
    <property type="evidence" value="ECO:0000318"/>
    <property type="project" value="GO_Central"/>
</dbReference>
<dbReference type="GO" id="GO:0017124">
    <property type="term" value="F:SH3 domain binding"/>
    <property type="evidence" value="ECO:0007669"/>
    <property type="project" value="UniProtKB-KW"/>
</dbReference>
<dbReference type="GO" id="GO:0014004">
    <property type="term" value="P:microglia differentiation"/>
    <property type="evidence" value="ECO:0000250"/>
    <property type="project" value="UniProtKB"/>
</dbReference>
<dbReference type="GO" id="GO:0051028">
    <property type="term" value="P:mRNA transport"/>
    <property type="evidence" value="ECO:0007669"/>
    <property type="project" value="UniProtKB-KW"/>
</dbReference>
<dbReference type="GO" id="GO:1905869">
    <property type="term" value="P:negative regulation of 3'-UTR-mediated mRNA stabilization"/>
    <property type="evidence" value="ECO:0000250"/>
    <property type="project" value="UniProtKB"/>
</dbReference>
<dbReference type="GO" id="GO:0120163">
    <property type="term" value="P:negative regulation of cold-induced thermogenesis"/>
    <property type="evidence" value="ECO:0000250"/>
    <property type="project" value="UniProtKB"/>
</dbReference>
<dbReference type="GO" id="GO:0045650">
    <property type="term" value="P:negative regulation of macrophage differentiation"/>
    <property type="evidence" value="ECO:0000250"/>
    <property type="project" value="UniProtKB"/>
</dbReference>
<dbReference type="GO" id="GO:2000626">
    <property type="term" value="P:negative regulation of miRNA catabolic process"/>
    <property type="evidence" value="ECO:0000250"/>
    <property type="project" value="UniProtKB"/>
</dbReference>
<dbReference type="GO" id="GO:0017148">
    <property type="term" value="P:negative regulation of translation"/>
    <property type="evidence" value="ECO:0000250"/>
    <property type="project" value="UniProtKB"/>
</dbReference>
<dbReference type="GO" id="GO:0048710">
    <property type="term" value="P:regulation of astrocyte differentiation"/>
    <property type="evidence" value="ECO:0000250"/>
    <property type="project" value="UniProtKB"/>
</dbReference>
<dbReference type="GO" id="GO:0010717">
    <property type="term" value="P:regulation of epithelial to mesenchymal transition"/>
    <property type="evidence" value="ECO:0000250"/>
    <property type="project" value="UniProtKB"/>
</dbReference>
<dbReference type="GO" id="GO:0048024">
    <property type="term" value="P:regulation of mRNA splicing, via spliceosome"/>
    <property type="evidence" value="ECO:0000250"/>
    <property type="project" value="UniProtKB"/>
</dbReference>
<dbReference type="GO" id="GO:0160091">
    <property type="term" value="P:spliceosome-depend formation of circular RNA"/>
    <property type="evidence" value="ECO:0000250"/>
    <property type="project" value="UniProtKB"/>
</dbReference>
<dbReference type="GO" id="GO:0035886">
    <property type="term" value="P:vascular associated smooth muscle cell differentiation"/>
    <property type="evidence" value="ECO:0000250"/>
    <property type="project" value="UniProtKB"/>
</dbReference>
<dbReference type="CDD" id="cd22465">
    <property type="entry name" value="KH-I_Hqk"/>
    <property type="match status" value="1"/>
</dbReference>
<dbReference type="FunFam" id="1.20.5.4010:FF:000001">
    <property type="entry name" value="protein quaking isoform X1"/>
    <property type="match status" value="1"/>
</dbReference>
<dbReference type="FunFam" id="3.30.1370.10:FF:000055">
    <property type="entry name" value="protein quaking isoform X1"/>
    <property type="match status" value="1"/>
</dbReference>
<dbReference type="Gene3D" id="1.20.5.4010">
    <property type="match status" value="1"/>
</dbReference>
<dbReference type="Gene3D" id="3.30.1370.10">
    <property type="entry name" value="K Homology domain, type 1"/>
    <property type="match status" value="1"/>
</dbReference>
<dbReference type="InterPro" id="IPR045071">
    <property type="entry name" value="BBP-like"/>
</dbReference>
<dbReference type="InterPro" id="IPR055256">
    <property type="entry name" value="KH_1_KHDC4/BBP-like"/>
</dbReference>
<dbReference type="InterPro" id="IPR004087">
    <property type="entry name" value="KH_dom"/>
</dbReference>
<dbReference type="InterPro" id="IPR036612">
    <property type="entry name" value="KH_dom_type_1_sf"/>
</dbReference>
<dbReference type="InterPro" id="IPR032367">
    <property type="entry name" value="Quaking_NLS"/>
</dbReference>
<dbReference type="InterPro" id="IPR032377">
    <property type="entry name" value="STAR_dimer"/>
</dbReference>
<dbReference type="PANTHER" id="PTHR11208:SF125">
    <property type="entry name" value="KH DOMAIN-CONTAINING RNA-BINDING PROTEIN QKI"/>
    <property type="match status" value="1"/>
</dbReference>
<dbReference type="PANTHER" id="PTHR11208">
    <property type="entry name" value="RNA-BINDING PROTEIN RELATED"/>
    <property type="match status" value="1"/>
</dbReference>
<dbReference type="Pfam" id="PF22675">
    <property type="entry name" value="KH-I_KHDC4-BBP"/>
    <property type="match status" value="1"/>
</dbReference>
<dbReference type="Pfam" id="PF16551">
    <property type="entry name" value="Quaking_NLS"/>
    <property type="match status" value="1"/>
</dbReference>
<dbReference type="Pfam" id="PF16544">
    <property type="entry name" value="STAR_dimer"/>
    <property type="match status" value="1"/>
</dbReference>
<dbReference type="SMART" id="SM00322">
    <property type="entry name" value="KH"/>
    <property type="match status" value="1"/>
</dbReference>
<dbReference type="SUPFAM" id="SSF54791">
    <property type="entry name" value="Eukaryotic type KH-domain (KH-domain type I)"/>
    <property type="match status" value="1"/>
</dbReference>
<proteinExistence type="evidence at transcript level"/>
<name>QKI_CANLF</name>
<keyword id="KW-0963">Cytoplasm</keyword>
<keyword id="KW-0217">Developmental protein</keyword>
<keyword id="KW-0221">Differentiation</keyword>
<keyword id="KW-0238">DNA-binding</keyword>
<keyword id="KW-0488">Methylation</keyword>
<keyword id="KW-0507">mRNA processing</keyword>
<keyword id="KW-0508">mRNA splicing</keyword>
<keyword id="KW-0509">mRNA transport</keyword>
<keyword id="KW-0539">Nucleus</keyword>
<keyword id="KW-0597">Phosphoprotein</keyword>
<keyword id="KW-1185">Reference proteome</keyword>
<keyword id="KW-0694">RNA-binding</keyword>
<keyword id="KW-0729">SH3-binding</keyword>
<keyword id="KW-0810">Translation regulation</keyword>
<keyword id="KW-0813">Transport</keyword>
<keyword id="KW-0832">Ubl conjugation</keyword>
<accession>Q9GMY1</accession>
<gene>
    <name evidence="3" type="primary">QKI</name>
</gene>
<reference key="1">
    <citation type="journal article" date="2002" name="J. Jpn. Vet. Med. Assoc.">
        <title>Nucleotide sequence of cDNA encoding for canine and feline quaking protein.</title>
        <authorList>
            <person name="Murata T."/>
            <person name="Yamashiro Y."/>
            <person name="Kondo T."/>
            <person name="Une S."/>
            <person name="Nakaichi M."/>
        </authorList>
    </citation>
    <scope>NUCLEOTIDE SEQUENCE [MRNA]</scope>
    <source>
        <strain>Beagle</strain>
        <tissue>Blood</tissue>
    </source>
</reference>
<evidence type="ECO:0000250" key="1">
    <source>
        <dbReference type="UniProtKB" id="Q17339"/>
    </source>
</evidence>
<evidence type="ECO:0000250" key="2">
    <source>
        <dbReference type="UniProtKB" id="Q96PU8"/>
    </source>
</evidence>
<evidence type="ECO:0000250" key="3">
    <source>
        <dbReference type="UniProtKB" id="Q9QYS9"/>
    </source>
</evidence>
<evidence type="ECO:0000305" key="4"/>
<sequence length="341" mass="37671">MVGEMETKEKPKPTPDYLMQLMNDKKLMSSLPNFCGIFNHLERLLDEEISRVRKDMYNDTLNGSTEKRSAELPDAVGPIVQLQEKLYVPVKEYPDFNFVGRILGPRGLTAKQLEAETGCKIMVRGKGSMRDKKKEEQNRGKPNWEHLNEDLHVLITVEDAQNRAEIKLKRAVEEVKKLLVPAAEGEDSLKKMQLMELAILNGTYRDANIKSPALAFSLAATAQAAPRIITGPAPVLPPAALRTPTPAGPTIMPLIRQIQTAVMPNGTPHPTAAIVPPGPEAGLIYTPYEYPYTLAPATSILEYPIEPSGVLGAVATKVRRHDMRVHPYQRIVTADRAATGN</sequence>
<comment type="function">
    <text evidence="2 3">RNA reader protein, which recognizes and binds specific RNAs, thereby regulating RNA metabolic processes, such as pre-mRNA splicing, circular RNA (circRNA) formation, mRNA export, mRNA stability and/or translation. Involved in various cellular processes, such as mRNA storage into stress granules, apoptosis, lipid deposition, interferon response, glial cell fate and development. Binds to the 5'-NACUAAY-N(1,20)-UAAY-3' RNA core sequence. Acts as a mRNA modification reader that specifically recognizes and binds mRNA transcripts modified by internal N(7)-methylguanine (m7G). Promotes the formation of circular RNAs (circRNAs) during the epithelial to mesenchymal transition and in cardiomyocytes: acts by binding to sites flanking circRNA-forming exons. CircRNAs are produced by back-splicing circularization of pre-mRNAs. Plays a central role in myelinization via 3 distinct mechanisms (By similarity). First, acts by protecting and promoting stability of target mRNAs such as MBP, SIRT2 and CDKN1B, which promotes oligodendrocyte differentiation. Second, participates in mRNA transport by regulating the nuclear export of MBP mRNA. Finally, indirectly regulates mRNA splicing of MAG pre-mRNA during oligodendrocyte differentiation by acting as a negative regulator of MAG exon 12 alternative splicing: acts by binding to HNRNPA1 mRNA splicing factor, preventing its translation. Involved in microglia differentiation and remyelination by regulating microexon alternative splicing of the Rho GTPase pathway (By similarity). Involved in macrophage differentiation: promotes monocyte differentiation by regulating pre-mRNA splicing in naive peripheral blood monocytes (By similarity). Acts as an important regulator of muscle development: required for the contractile function of cardiomyocytes by regulating alternative splicing of cardiomyocyte transcripts. Acts as a negative regulator of thermogenesis by decreasing stability, nuclear export and translation of mRNAs encoding PPARGC1A and UCP1. Also required for visceral endoderm function and blood vessel development (By similarity). May also play a role in smooth muscle development (By similarity). In addition to its RNA-binding activity, also acts as a nuclear transcription coactivator for SREBF2/SREBP2 (By similarity).</text>
</comment>
<comment type="subunit">
    <text evidence="2 3">Homodimer; does not require RNA to homodimerize (By similarity). Able to heterodimerize with BICC1 (By similarity).</text>
</comment>
<comment type="subcellular location">
    <subcellularLocation>
        <location evidence="2">Nucleus</location>
    </subcellularLocation>
    <subcellularLocation>
        <location evidence="2">Cytoplasm</location>
    </subcellularLocation>
</comment>
<comment type="domain">
    <text evidence="2">The KH domain and the Qua2 region are involved in RNA binding.</text>
</comment>
<comment type="PTM">
    <text evidence="3">Methylated by PRMT1.</text>
</comment>
<comment type="PTM">
    <text evidence="3">Tyrosine phosphorylated at its C-terminus, probably by FYN. Phosphorylation leads to decreased mRNA-binding affinity, affecting transport and/or stabilization of MBP mRNA (By similarity).</text>
</comment>
<comment type="PTM">
    <text evidence="3">Ubiquitinated by RNF6 in macrophages, leading to its degradation.</text>
</comment>
<comment type="similarity">
    <text evidence="4">Belongs to the quaking family.</text>
</comment>